<keyword id="KW-0240">DNA-directed RNA polymerase</keyword>
<keyword id="KW-0548">Nucleotidyltransferase</keyword>
<keyword id="KW-1185">Reference proteome</keyword>
<keyword id="KW-0804">Transcription</keyword>
<keyword id="KW-0808">Transferase</keyword>
<organism>
    <name type="scientific">Staphylococcus saprophyticus subsp. saprophyticus (strain ATCC 15305 / DSM 20229 / NCIMB 8711 / NCTC 7292 / S-41)</name>
    <dbReference type="NCBI Taxonomy" id="342451"/>
    <lineage>
        <taxon>Bacteria</taxon>
        <taxon>Bacillati</taxon>
        <taxon>Bacillota</taxon>
        <taxon>Bacilli</taxon>
        <taxon>Bacillales</taxon>
        <taxon>Staphylococcaceae</taxon>
        <taxon>Staphylococcus</taxon>
    </lineage>
</organism>
<reference key="1">
    <citation type="journal article" date="2005" name="Proc. Natl. Acad. Sci. U.S.A.">
        <title>Whole genome sequence of Staphylococcus saprophyticus reveals the pathogenesis of uncomplicated urinary tract infection.</title>
        <authorList>
            <person name="Kuroda M."/>
            <person name="Yamashita A."/>
            <person name="Hirakawa H."/>
            <person name="Kumano M."/>
            <person name="Morikawa K."/>
            <person name="Higashide M."/>
            <person name="Maruyama A."/>
            <person name="Inose Y."/>
            <person name="Matoba K."/>
            <person name="Toh H."/>
            <person name="Kuhara S."/>
            <person name="Hattori M."/>
            <person name="Ohta T."/>
        </authorList>
    </citation>
    <scope>NUCLEOTIDE SEQUENCE [LARGE SCALE GENOMIC DNA]</scope>
    <source>
        <strain>ATCC 15305 / DSM 20229 / NCIMB 8711 / NCTC 7292 / S-41</strain>
    </source>
</reference>
<accession>Q49V52</accession>
<name>RPOB_STAS1</name>
<feature type="chain" id="PRO_0000047968" description="DNA-directed RNA polymerase subunit beta">
    <location>
        <begin position="1"/>
        <end position="1183"/>
    </location>
</feature>
<feature type="region of interest" description="Disordered" evidence="2">
    <location>
        <begin position="1153"/>
        <end position="1183"/>
    </location>
</feature>
<feature type="compositionally biased region" description="Acidic residues" evidence="2">
    <location>
        <begin position="1153"/>
        <end position="1162"/>
    </location>
</feature>
<feature type="compositionally biased region" description="Polar residues" evidence="2">
    <location>
        <begin position="1173"/>
        <end position="1183"/>
    </location>
</feature>
<comment type="function">
    <text evidence="1">DNA-dependent RNA polymerase catalyzes the transcription of DNA into RNA using the four ribonucleoside triphosphates as substrates.</text>
</comment>
<comment type="catalytic activity">
    <reaction evidence="1">
        <text>RNA(n) + a ribonucleoside 5'-triphosphate = RNA(n+1) + diphosphate</text>
        <dbReference type="Rhea" id="RHEA:21248"/>
        <dbReference type="Rhea" id="RHEA-COMP:14527"/>
        <dbReference type="Rhea" id="RHEA-COMP:17342"/>
        <dbReference type="ChEBI" id="CHEBI:33019"/>
        <dbReference type="ChEBI" id="CHEBI:61557"/>
        <dbReference type="ChEBI" id="CHEBI:140395"/>
        <dbReference type="EC" id="2.7.7.6"/>
    </reaction>
</comment>
<comment type="subunit">
    <text evidence="1">The RNAP catalytic core consists of 2 alpha, 1 beta, 1 beta' and 1 omega subunit. When a sigma factor is associated with the core the holoenzyme is formed, which can initiate transcription.</text>
</comment>
<comment type="similarity">
    <text evidence="1">Belongs to the RNA polymerase beta chain family.</text>
</comment>
<sequence>MAGQFVQYGRHRKRRNYARISEVLELPNLIEIQTKSYDWFLEEGLLEMFRDISPIEDFTGNLSLEFVDYRLGEPKYDLEESKNRDTTYSAPLRVKVRLIIKETGEVKEQEVFMGDFPLMTDTGTFVINGAERVIVSQLVRSPSVYFNEKLDKNGRTNFDATIIPNRGAWLEYETDAKDVVYVRIDRTRKLPLTVLLRALGFSTDQEIVDLLGDNEYLRNTLEKDGTETTDQALLEIYERLRPGEPPTVENAKSLLYSRFFDPKRYDLASVGRYKANKKLHLKHRLFNQKLAEPIVNTETGEIVAEEGTVLDRRNLDEIMDVLEANANSEVFELEGTVIDEPVEIQSIKVYVPNDEEGRTTTVIGNAFPDSEVKCITPADIIASMSYFFNLLSGIGFTDDIDHLGNRRLRSVGELLQNQFRIGLSRMERVVRERMSIQDTDSVTPQQLINIRPVIASIKEFFGSSQLSQFMDQANPLAELTHKRRLSALGPGGLTRERAQMEVRDVHYSHYGRMCPIETPEGPNIGLINSLSSYARVNEFGFIETPYRKVDLETNSITDQIDYLTADEEDSYVVAQANSTLDENGRFIADEVVCRFRGNNTVMAKEKMDYMDVSPKQVVSAATACIPFLENDDSNRALMGANMQRQAVPLMNPESPFVGTGMEHVAARDSGAAIVAKRKGRVEHVESNEILVRQLIEEDGQEYEGELDRYPLAKFKRSNTGTCYNQRPIVASGDVVTKGEILADGPSMELGEMALGRNVVVGFMTWDGYNYEDAVIMSERLVKDDVYTSIHIEEYESEARDTKLGPEEITRDIPNVSDSALKNLDDRGIVYVGAEVNDGDILVGKVTPKGVTELTAEERLLHAIFGEKAREVRDTSLRVPHGAGGIVLDVKVFNREEGDDTLSPGVNQLVRVYIVQKRKIHVGDKMCGRHGNKGVISKLVPEEDMPYLPDGTPIDIMLNPLGVPSRMNIGQVLELHLGMAAKNLGIHVASPVFDGASDEDVWSTIEEAGMARDGKTVLYDGRTGEPFDNRISVGVMYMLKLAHMVDDKLHARSTGPYSLVTQQPLGGKAQFGGQRFGEMEVWALEAYGAAYTLQEILTYKSDDTVGRVKTYESIVKGENITKPGVPESFRVLMKELQSLGLDVKIMDEHDNEIDMQDNEEEDVVERKVDLQQKDAPQSQKEVTD</sequence>
<gene>
    <name evidence="1" type="primary">rpoB</name>
    <name type="ordered locus">SSP2213</name>
</gene>
<evidence type="ECO:0000255" key="1">
    <source>
        <dbReference type="HAMAP-Rule" id="MF_01321"/>
    </source>
</evidence>
<evidence type="ECO:0000256" key="2">
    <source>
        <dbReference type="SAM" id="MobiDB-lite"/>
    </source>
</evidence>
<protein>
    <recommendedName>
        <fullName evidence="1">DNA-directed RNA polymerase subunit beta</fullName>
        <shortName evidence="1">RNAP subunit beta</shortName>
        <ecNumber evidence="1">2.7.7.6</ecNumber>
    </recommendedName>
    <alternativeName>
        <fullName evidence="1">RNA polymerase subunit beta</fullName>
    </alternativeName>
    <alternativeName>
        <fullName evidence="1">Transcriptase subunit beta</fullName>
    </alternativeName>
</protein>
<proteinExistence type="inferred from homology"/>
<dbReference type="EC" id="2.7.7.6" evidence="1"/>
<dbReference type="EMBL" id="AP008934">
    <property type="protein sequence ID" value="BAE19358.1"/>
    <property type="molecule type" value="Genomic_DNA"/>
</dbReference>
<dbReference type="RefSeq" id="WP_011303839.1">
    <property type="nucleotide sequence ID" value="NZ_MTGA01000039.1"/>
</dbReference>
<dbReference type="SMR" id="Q49V52"/>
<dbReference type="GeneID" id="3615543"/>
<dbReference type="KEGG" id="ssp:SSP2213"/>
<dbReference type="PATRIC" id="fig|342451.11.peg.2204"/>
<dbReference type="eggNOG" id="COG0085">
    <property type="taxonomic scope" value="Bacteria"/>
</dbReference>
<dbReference type="HOGENOM" id="CLU_000524_4_1_9"/>
<dbReference type="OrthoDB" id="9803954at2"/>
<dbReference type="Proteomes" id="UP000006371">
    <property type="component" value="Chromosome"/>
</dbReference>
<dbReference type="GO" id="GO:0000428">
    <property type="term" value="C:DNA-directed RNA polymerase complex"/>
    <property type="evidence" value="ECO:0007669"/>
    <property type="project" value="UniProtKB-KW"/>
</dbReference>
<dbReference type="GO" id="GO:0003677">
    <property type="term" value="F:DNA binding"/>
    <property type="evidence" value="ECO:0007669"/>
    <property type="project" value="UniProtKB-UniRule"/>
</dbReference>
<dbReference type="GO" id="GO:0003899">
    <property type="term" value="F:DNA-directed RNA polymerase activity"/>
    <property type="evidence" value="ECO:0007669"/>
    <property type="project" value="UniProtKB-UniRule"/>
</dbReference>
<dbReference type="GO" id="GO:0032549">
    <property type="term" value="F:ribonucleoside binding"/>
    <property type="evidence" value="ECO:0007669"/>
    <property type="project" value="InterPro"/>
</dbReference>
<dbReference type="GO" id="GO:0006351">
    <property type="term" value="P:DNA-templated transcription"/>
    <property type="evidence" value="ECO:0007669"/>
    <property type="project" value="UniProtKB-UniRule"/>
</dbReference>
<dbReference type="CDD" id="cd00653">
    <property type="entry name" value="RNA_pol_B_RPB2"/>
    <property type="match status" value="1"/>
</dbReference>
<dbReference type="FunFam" id="3.90.1800.10:FF:000001">
    <property type="entry name" value="DNA-directed RNA polymerase subunit beta"/>
    <property type="match status" value="1"/>
</dbReference>
<dbReference type="Gene3D" id="2.40.50.100">
    <property type="match status" value="1"/>
</dbReference>
<dbReference type="Gene3D" id="2.40.50.150">
    <property type="match status" value="1"/>
</dbReference>
<dbReference type="Gene3D" id="3.90.1100.10">
    <property type="match status" value="3"/>
</dbReference>
<dbReference type="Gene3D" id="2.40.270.10">
    <property type="entry name" value="DNA-directed RNA polymerase, subunit 2, domain 6"/>
    <property type="match status" value="1"/>
</dbReference>
<dbReference type="Gene3D" id="3.90.1800.10">
    <property type="entry name" value="RNA polymerase alpha subunit dimerisation domain"/>
    <property type="match status" value="1"/>
</dbReference>
<dbReference type="Gene3D" id="3.90.1110.10">
    <property type="entry name" value="RNA polymerase Rpb2, domain 2"/>
    <property type="match status" value="1"/>
</dbReference>
<dbReference type="HAMAP" id="MF_01321">
    <property type="entry name" value="RNApol_bact_RpoB"/>
    <property type="match status" value="1"/>
</dbReference>
<dbReference type="InterPro" id="IPR019462">
    <property type="entry name" value="DNA-dir_RNA_pol_bsu_external_1"/>
</dbReference>
<dbReference type="InterPro" id="IPR015712">
    <property type="entry name" value="DNA-dir_RNA_pol_su2"/>
</dbReference>
<dbReference type="InterPro" id="IPR007120">
    <property type="entry name" value="DNA-dir_RNAP_su2_dom"/>
</dbReference>
<dbReference type="InterPro" id="IPR037033">
    <property type="entry name" value="DNA-dir_RNAP_su2_hyb_sf"/>
</dbReference>
<dbReference type="InterPro" id="IPR010243">
    <property type="entry name" value="RNA_pol_bsu_bac"/>
</dbReference>
<dbReference type="InterPro" id="IPR007121">
    <property type="entry name" value="RNA_pol_bsu_CS"/>
</dbReference>
<dbReference type="InterPro" id="IPR007644">
    <property type="entry name" value="RNA_pol_bsu_protrusion"/>
</dbReference>
<dbReference type="InterPro" id="IPR007642">
    <property type="entry name" value="RNA_pol_Rpb2_2"/>
</dbReference>
<dbReference type="InterPro" id="IPR037034">
    <property type="entry name" value="RNA_pol_Rpb2_2_sf"/>
</dbReference>
<dbReference type="InterPro" id="IPR007645">
    <property type="entry name" value="RNA_pol_Rpb2_3"/>
</dbReference>
<dbReference type="InterPro" id="IPR007641">
    <property type="entry name" value="RNA_pol_Rpb2_7"/>
</dbReference>
<dbReference type="InterPro" id="IPR014724">
    <property type="entry name" value="RNA_pol_RPB2_OB-fold"/>
</dbReference>
<dbReference type="NCBIfam" id="NF001616">
    <property type="entry name" value="PRK00405.1"/>
    <property type="match status" value="1"/>
</dbReference>
<dbReference type="NCBIfam" id="TIGR02013">
    <property type="entry name" value="rpoB"/>
    <property type="match status" value="1"/>
</dbReference>
<dbReference type="PANTHER" id="PTHR20856">
    <property type="entry name" value="DNA-DIRECTED RNA POLYMERASE I SUBUNIT 2"/>
    <property type="match status" value="1"/>
</dbReference>
<dbReference type="Pfam" id="PF04563">
    <property type="entry name" value="RNA_pol_Rpb2_1"/>
    <property type="match status" value="1"/>
</dbReference>
<dbReference type="Pfam" id="PF04561">
    <property type="entry name" value="RNA_pol_Rpb2_2"/>
    <property type="match status" value="2"/>
</dbReference>
<dbReference type="Pfam" id="PF04565">
    <property type="entry name" value="RNA_pol_Rpb2_3"/>
    <property type="match status" value="1"/>
</dbReference>
<dbReference type="Pfam" id="PF10385">
    <property type="entry name" value="RNA_pol_Rpb2_45"/>
    <property type="match status" value="1"/>
</dbReference>
<dbReference type="Pfam" id="PF00562">
    <property type="entry name" value="RNA_pol_Rpb2_6"/>
    <property type="match status" value="1"/>
</dbReference>
<dbReference type="Pfam" id="PF04560">
    <property type="entry name" value="RNA_pol_Rpb2_7"/>
    <property type="match status" value="1"/>
</dbReference>
<dbReference type="SUPFAM" id="SSF64484">
    <property type="entry name" value="beta and beta-prime subunits of DNA dependent RNA-polymerase"/>
    <property type="match status" value="1"/>
</dbReference>
<dbReference type="PROSITE" id="PS01166">
    <property type="entry name" value="RNA_POL_BETA"/>
    <property type="match status" value="1"/>
</dbReference>